<sequence length="794" mass="90647">MAGWIQAQQLQGDALRQMQVLYGQHFPIEVRHYLAQWIESQPWDAIDLDNPQDRAQATQLLEGLVQELQKKAEHQVGEDGFLLKIKLGHYATQLQKTYDRCPLELVRCIRHILYNEQRLVREANNCSSPAGILVDAMSQKHLQINQTFEELRLVTQDTENELKKLQQTQEYFIIQYQESLRIQAQFAQLAQLSPQERLSRETALQQKQVSLEAWLQREAQTLQQYRVELAEKHQKTLQLLRKQQTIILDDELIQWKRRQQLAGNGGPPEGSLDVLQSWCEKLAEIIWQNRQQIRRAEHLCQQLPIPGPVEEMLAEVNATITDIISALVTSTFIIEKQPPQVLKTQTKFAATVRLLVGGKLNVHMNPPQVKATIISEQQAKSLLKNENTRNECSGEILNNCCVMEYHQATGTLSAHFRNMSLKRIKRADRRGAESVTEEKFTVLFESQFSVGSNELVFQVKTLSLPVVVIVHGSQDHNATATVLWDNAFAEPGRVPFAVPDKVLWPQLCEALNMKFKAEVQSNRGLTKENLVFLAQKLFNNSSSHLEDYSGLSVSWSQFNRENLPGWNYTFWQWFDGVMEVLKKHHKPHWNDGAILGFVNKQQAHDLLINKPDGTFLLRFSDSEIGGITIAWKFDSPERNLWNLKPFTTRDFSIRSLADRLGDLSYLIYVFPDRPKDEVFSKYYTPVLAKAVDGYVKPQIKQVVPEFVNASADAGGSSATYMDQAPSPAVCPQAPYNMYPQNPDHVLDQDGEFDLDETMDVARHVEELLRRPMDSLDSRLSPPAGLFTSARGSLS</sequence>
<organism>
    <name type="scientific">Homo sapiens</name>
    <name type="common">Human</name>
    <dbReference type="NCBI Taxonomy" id="9606"/>
    <lineage>
        <taxon>Eukaryota</taxon>
        <taxon>Metazoa</taxon>
        <taxon>Chordata</taxon>
        <taxon>Craniata</taxon>
        <taxon>Vertebrata</taxon>
        <taxon>Euteleostomi</taxon>
        <taxon>Mammalia</taxon>
        <taxon>Eutheria</taxon>
        <taxon>Euarchontoglires</taxon>
        <taxon>Primates</taxon>
        <taxon>Haplorrhini</taxon>
        <taxon>Catarrhini</taxon>
        <taxon>Hominidae</taxon>
        <taxon>Homo</taxon>
    </lineage>
</organism>
<comment type="function">
    <text evidence="10">Carries out a dual function: signal transduction and activation of transcription. Mediates cellular responses to the cytokine KITLG/SCF and other growth factors. Mediates cellular responses to ERBB4. May mediate cellular responses to activated FGFR1, FGFR2, FGFR3 and FGFR4. Binds to the GAS element and activates PRL-induced transcription. Regulates the expression of milk proteins during lactation.</text>
</comment>
<comment type="subunit">
    <text evidence="2 8 10 12">Forms a homodimer or a heterodimer with a related family member. Binds NR3C1 (By similarity). Interacts with NCOA1 and SOCS7 (PubMed:12954634). Interacts with ERBB4 (PubMed:15534001). Interacts with EBF4 (PubMed:35939714). Interacts with CD69 (By similarity).</text>
</comment>
<comment type="interaction">
    <interactant intactId="EBI-749537">
        <id>P42229</id>
    </interactant>
    <interactant intactId="EBI-7737644">
        <id>Q99490-2</id>
        <label>AGAP2</label>
    </interactant>
    <organismsDiffer>false</organismsDiffer>
    <experiments>3</experiments>
</comment>
<comment type="interaction">
    <interactant intactId="EBI-749537">
        <id>P42229</id>
    </interactant>
    <interactant intactId="EBI-297353">
        <id>P00533</id>
        <label>EGFR</label>
    </interactant>
    <organismsDiffer>false</organismsDiffer>
    <experiments>4</experiments>
</comment>
<comment type="interaction">
    <interactant intactId="EBI-749537">
        <id>P42229</id>
    </interactant>
    <interactant intactId="EBI-968788">
        <id>P18031</id>
        <label>PTPN1</label>
    </interactant>
    <organismsDiffer>false</organismsDiffer>
    <experiments>2</experiments>
</comment>
<comment type="interaction">
    <interactant intactId="EBI-749537">
        <id>P42229</id>
    </interactant>
    <interactant intactId="EBI-722877">
        <id>Q99081</id>
        <label>TCF12</label>
    </interactant>
    <organismsDiffer>false</organismsDiffer>
    <experiments>3</experiments>
</comment>
<comment type="subcellular location">
    <subcellularLocation>
        <location evidence="10">Cytoplasm</location>
    </subcellularLocation>
    <subcellularLocation>
        <location evidence="10">Nucleus</location>
    </subcellularLocation>
    <text>Translocated into the nucleus in response to phosphorylation.</text>
</comment>
<comment type="alternative products">
    <event type="alternative splicing"/>
    <isoform>
        <id>P42229-1</id>
        <name>1</name>
        <sequence type="displayed"/>
    </isoform>
    <isoform>
        <id>P42229-2</id>
        <name>2</name>
        <sequence type="described" ref="VSP_053332"/>
    </isoform>
</comment>
<comment type="PTM">
    <text evidence="1 2 3 7 9 11">Tyrosine phosphorylated in response to KITLG/SCF, IL2, IL3, IL7, IL15, CSF2/GMCSF, GH1, PRL, EPO and THPO (By similarity). Activated KIT promotes phosphorylation on tyrosine residues and subsequent translocation to the nucleus (PubMed:21135090). Tyrosine phosphorylated in response to constitutively activated FGFR1, FGFR2, FGFR3 and FGFR4 (By similarity). Tyrosine phosphorylation is required for DNA-binding activity and dimerization. Serine phosphorylation is also required for maximal transcriptional activity (By similarity). Tyrosine phosphorylated in response to signaling via activated FLT3; wild-type FLT3 results in much weaker phosphorylation than constitutively activated mutant FLT3 (PubMed:14504097). Alternatively, can be phosphorylated by JAK2 at Tyr-694 (PubMed:12529425).</text>
</comment>
<comment type="PTM">
    <text evidence="2">ISGylated.</text>
</comment>
<comment type="similarity">
    <text evidence="16">Belongs to the transcription factor STAT family.</text>
</comment>
<comment type="caution">
    <text evidence="6 14">It was reported that dephosphorylation on tyrosine residues by PTPN2 would negatively regulate prolactin signaling pathway (PubMed:11773439). However, the corresponding article has been retracted (PubMed:24319783).</text>
</comment>
<comment type="online information" name="Wikipedia">
    <link uri="https://en.wikipedia.org/wiki/STAT5"/>
    <text>STAT5 entry</text>
</comment>
<protein>
    <recommendedName>
        <fullName>Signal transducer and activator of transcription 5A</fullName>
    </recommendedName>
</protein>
<reference key="1">
    <citation type="journal article" date="1995" name="Immunity">
        <title>Identification and purification of human Stat proteins activated in response to interleukin-2.</title>
        <authorList>
            <person name="Hou J."/>
            <person name="Schindler U."/>
            <person name="Henzel W.J."/>
            <person name="Wong S.C."/>
            <person name="McKnight S.L."/>
        </authorList>
    </citation>
    <scope>NUCLEOTIDE SEQUENCE [MRNA] (ISOFORM 1)</scope>
</reference>
<reference key="2">
    <citation type="submission" date="1995-12" db="EMBL/GenBank/DDBJ databases">
        <authorList>
            <person name="Lin J.X."/>
            <person name="Mietz J."/>
            <person name="Modi W.S."/>
            <person name="John S."/>
            <person name="Leonard W.J."/>
        </authorList>
    </citation>
    <scope>NUCLEOTIDE SEQUENCE [MRNA] (ISOFORM 1)</scope>
</reference>
<reference key="3">
    <citation type="submission" date="2006-04" db="EMBL/GenBank/DDBJ databases">
        <title>Cloning and characterization of a variant of human stat5a, missing a portion of the n-terminal region, with dominant negative effects on the growth of breast cancer cells and [beta]-casein gene expression.</title>
        <authorList>
            <person name="Tan D."/>
            <person name="Deng C."/>
            <person name="Luben R.A."/>
            <person name="Walker A.M."/>
        </authorList>
    </citation>
    <scope>NUCLEOTIDE SEQUENCE [MRNA] (ISOFORM 2)</scope>
    <scope>ALTERNATIVE SPLICING</scope>
</reference>
<reference key="4">
    <citation type="journal article" date="2004" name="Nat. Genet.">
        <title>Complete sequencing and characterization of 21,243 full-length human cDNAs.</title>
        <authorList>
            <person name="Ota T."/>
            <person name="Suzuki Y."/>
            <person name="Nishikawa T."/>
            <person name="Otsuki T."/>
            <person name="Sugiyama T."/>
            <person name="Irie R."/>
            <person name="Wakamatsu A."/>
            <person name="Hayashi K."/>
            <person name="Sato H."/>
            <person name="Nagai K."/>
            <person name="Kimura K."/>
            <person name="Makita H."/>
            <person name="Sekine M."/>
            <person name="Obayashi M."/>
            <person name="Nishi T."/>
            <person name="Shibahara T."/>
            <person name="Tanaka T."/>
            <person name="Ishii S."/>
            <person name="Yamamoto J."/>
            <person name="Saito K."/>
            <person name="Kawai Y."/>
            <person name="Isono Y."/>
            <person name="Nakamura Y."/>
            <person name="Nagahari K."/>
            <person name="Murakami K."/>
            <person name="Yasuda T."/>
            <person name="Iwayanagi T."/>
            <person name="Wagatsuma M."/>
            <person name="Shiratori A."/>
            <person name="Sudo H."/>
            <person name="Hosoiri T."/>
            <person name="Kaku Y."/>
            <person name="Kodaira H."/>
            <person name="Kondo H."/>
            <person name="Sugawara M."/>
            <person name="Takahashi M."/>
            <person name="Kanda K."/>
            <person name="Yokoi T."/>
            <person name="Furuya T."/>
            <person name="Kikkawa E."/>
            <person name="Omura Y."/>
            <person name="Abe K."/>
            <person name="Kamihara K."/>
            <person name="Katsuta N."/>
            <person name="Sato K."/>
            <person name="Tanikawa M."/>
            <person name="Yamazaki M."/>
            <person name="Ninomiya K."/>
            <person name="Ishibashi T."/>
            <person name="Yamashita H."/>
            <person name="Murakawa K."/>
            <person name="Fujimori K."/>
            <person name="Tanai H."/>
            <person name="Kimata M."/>
            <person name="Watanabe M."/>
            <person name="Hiraoka S."/>
            <person name="Chiba Y."/>
            <person name="Ishida S."/>
            <person name="Ono Y."/>
            <person name="Takiguchi S."/>
            <person name="Watanabe S."/>
            <person name="Yosida M."/>
            <person name="Hotuta T."/>
            <person name="Kusano J."/>
            <person name="Kanehori K."/>
            <person name="Takahashi-Fujii A."/>
            <person name="Hara H."/>
            <person name="Tanase T.-O."/>
            <person name="Nomura Y."/>
            <person name="Togiya S."/>
            <person name="Komai F."/>
            <person name="Hara R."/>
            <person name="Takeuchi K."/>
            <person name="Arita M."/>
            <person name="Imose N."/>
            <person name="Musashino K."/>
            <person name="Yuuki H."/>
            <person name="Oshima A."/>
            <person name="Sasaki N."/>
            <person name="Aotsuka S."/>
            <person name="Yoshikawa Y."/>
            <person name="Matsunawa H."/>
            <person name="Ichihara T."/>
            <person name="Shiohata N."/>
            <person name="Sano S."/>
            <person name="Moriya S."/>
            <person name="Momiyama H."/>
            <person name="Satoh N."/>
            <person name="Takami S."/>
            <person name="Terashima Y."/>
            <person name="Suzuki O."/>
            <person name="Nakagawa S."/>
            <person name="Senoh A."/>
            <person name="Mizoguchi H."/>
            <person name="Goto Y."/>
            <person name="Shimizu F."/>
            <person name="Wakebe H."/>
            <person name="Hishigaki H."/>
            <person name="Watanabe T."/>
            <person name="Sugiyama A."/>
            <person name="Takemoto M."/>
            <person name="Kawakami B."/>
            <person name="Yamazaki M."/>
            <person name="Watanabe K."/>
            <person name="Kumagai A."/>
            <person name="Itakura S."/>
            <person name="Fukuzumi Y."/>
            <person name="Fujimori Y."/>
            <person name="Komiyama M."/>
            <person name="Tashiro H."/>
            <person name="Tanigami A."/>
            <person name="Fujiwara T."/>
            <person name="Ono T."/>
            <person name="Yamada K."/>
            <person name="Fujii Y."/>
            <person name="Ozaki K."/>
            <person name="Hirao M."/>
            <person name="Ohmori Y."/>
            <person name="Kawabata A."/>
            <person name="Hikiji T."/>
            <person name="Kobatake N."/>
            <person name="Inagaki H."/>
            <person name="Ikema Y."/>
            <person name="Okamoto S."/>
            <person name="Okitani R."/>
            <person name="Kawakami T."/>
            <person name="Noguchi S."/>
            <person name="Itoh T."/>
            <person name="Shigeta K."/>
            <person name="Senba T."/>
            <person name="Matsumura K."/>
            <person name="Nakajima Y."/>
            <person name="Mizuno T."/>
            <person name="Morinaga M."/>
            <person name="Sasaki M."/>
            <person name="Togashi T."/>
            <person name="Oyama M."/>
            <person name="Hata H."/>
            <person name="Watanabe M."/>
            <person name="Komatsu T."/>
            <person name="Mizushima-Sugano J."/>
            <person name="Satoh T."/>
            <person name="Shirai Y."/>
            <person name="Takahashi Y."/>
            <person name="Nakagawa K."/>
            <person name="Okumura K."/>
            <person name="Nagase T."/>
            <person name="Nomura N."/>
            <person name="Kikuchi H."/>
            <person name="Masuho Y."/>
            <person name="Yamashita R."/>
            <person name="Nakai K."/>
            <person name="Yada T."/>
            <person name="Nakamura Y."/>
            <person name="Ohara O."/>
            <person name="Isogai T."/>
            <person name="Sugano S."/>
        </authorList>
    </citation>
    <scope>NUCLEOTIDE SEQUENCE [LARGE SCALE MRNA] (ISOFORM 2)</scope>
    <source>
        <tissue>Synovium</tissue>
    </source>
</reference>
<reference key="5">
    <citation type="journal article" date="2006" name="Nature">
        <title>DNA sequence of human chromosome 17 and analysis of rearrangement in the human lineage.</title>
        <authorList>
            <person name="Zody M.C."/>
            <person name="Garber M."/>
            <person name="Adams D.J."/>
            <person name="Sharpe T."/>
            <person name="Harrow J."/>
            <person name="Lupski J.R."/>
            <person name="Nicholson C."/>
            <person name="Searle S.M."/>
            <person name="Wilming L."/>
            <person name="Young S.K."/>
            <person name="Abouelleil A."/>
            <person name="Allen N.R."/>
            <person name="Bi W."/>
            <person name="Bloom T."/>
            <person name="Borowsky M.L."/>
            <person name="Bugalter B.E."/>
            <person name="Butler J."/>
            <person name="Chang J.L."/>
            <person name="Chen C.-K."/>
            <person name="Cook A."/>
            <person name="Corum B."/>
            <person name="Cuomo C.A."/>
            <person name="de Jong P.J."/>
            <person name="DeCaprio D."/>
            <person name="Dewar K."/>
            <person name="FitzGerald M."/>
            <person name="Gilbert J."/>
            <person name="Gibson R."/>
            <person name="Gnerre S."/>
            <person name="Goldstein S."/>
            <person name="Grafham D.V."/>
            <person name="Grocock R."/>
            <person name="Hafez N."/>
            <person name="Hagopian D.S."/>
            <person name="Hart E."/>
            <person name="Norman C.H."/>
            <person name="Humphray S."/>
            <person name="Jaffe D.B."/>
            <person name="Jones M."/>
            <person name="Kamal M."/>
            <person name="Khodiyar V.K."/>
            <person name="LaButti K."/>
            <person name="Laird G."/>
            <person name="Lehoczky J."/>
            <person name="Liu X."/>
            <person name="Lokyitsang T."/>
            <person name="Loveland J."/>
            <person name="Lui A."/>
            <person name="Macdonald P."/>
            <person name="Major J.E."/>
            <person name="Matthews L."/>
            <person name="Mauceli E."/>
            <person name="McCarroll S.A."/>
            <person name="Mihalev A.H."/>
            <person name="Mudge J."/>
            <person name="Nguyen C."/>
            <person name="Nicol R."/>
            <person name="O'Leary S.B."/>
            <person name="Osoegawa K."/>
            <person name="Schwartz D.C."/>
            <person name="Shaw-Smith C."/>
            <person name="Stankiewicz P."/>
            <person name="Steward C."/>
            <person name="Swarbreck D."/>
            <person name="Venkataraman V."/>
            <person name="Whittaker C.A."/>
            <person name="Yang X."/>
            <person name="Zimmer A.R."/>
            <person name="Bradley A."/>
            <person name="Hubbard T."/>
            <person name="Birren B.W."/>
            <person name="Rogers J."/>
            <person name="Lander E.S."/>
            <person name="Nusbaum C."/>
        </authorList>
    </citation>
    <scope>NUCLEOTIDE SEQUENCE [LARGE SCALE GENOMIC DNA]</scope>
</reference>
<reference key="6">
    <citation type="journal article" date="2004" name="Genome Res.">
        <title>The status, quality, and expansion of the NIH full-length cDNA project: the Mammalian Gene Collection (MGC).</title>
        <authorList>
            <consortium name="The MGC Project Team"/>
        </authorList>
    </citation>
    <scope>NUCLEOTIDE SEQUENCE [LARGE SCALE MRNA] (ISOFORM 1)</scope>
    <source>
        <tissue>Cervix</tissue>
    </source>
</reference>
<reference key="7">
    <citation type="journal article" date="2002" name="Mol. Endocrinol.">
        <title>A nuclear protein tyrosine phosphatase TC-PTP is a potential negative regulator of the PRL-mediated signaling pathway: dephosphorylation and deactivation of signal transducer and activator of transcription 5a and 5b by TC-PTP in nucleus.</title>
        <authorList>
            <person name="Aoki N."/>
            <person name="Matsuda T."/>
        </authorList>
    </citation>
    <scope>RETRACTED PAPER</scope>
</reference>
<reference key="8">
    <citation type="journal article" date="2013" name="Mol. Endocrinol.">
        <title>Retraction.</title>
        <authorList>
            <person name="Aoki N."/>
            <person name="Matsuda T."/>
        </authorList>
    </citation>
    <scope>RETRACTION NOTICE OF PUBMED:11773439</scope>
    <scope>CAUTION</scope>
</reference>
<reference key="9">
    <citation type="journal article" date="2008" name="Proc. Natl. Acad. Sci. U.S.A.">
        <title>A quantitative atlas of mitotic phosphorylation.</title>
        <authorList>
            <person name="Dephoure N."/>
            <person name="Zhou C."/>
            <person name="Villen J."/>
            <person name="Beausoleil S.A."/>
            <person name="Bakalarski C.E."/>
            <person name="Elledge S.J."/>
            <person name="Gygi S.P."/>
        </authorList>
    </citation>
    <scope>IDENTIFICATION BY MASS SPECTROMETRY [LARGE SCALE ANALYSIS]</scope>
    <source>
        <tissue>Cervix carcinoma</tissue>
    </source>
</reference>
<reference key="10">
    <citation type="journal article" date="2010" name="Sci. Signal.">
        <title>Quantitative phosphoproteomics reveals widespread full phosphorylation site occupancy during mitosis.</title>
        <authorList>
            <person name="Olsen J.V."/>
            <person name="Vermeulen M."/>
            <person name="Santamaria A."/>
            <person name="Kumar C."/>
            <person name="Miller M.L."/>
            <person name="Jensen L.J."/>
            <person name="Gnad F."/>
            <person name="Cox J."/>
            <person name="Jensen T.S."/>
            <person name="Nigg E.A."/>
            <person name="Brunak S."/>
            <person name="Mann M."/>
        </authorList>
    </citation>
    <scope>PHOSPHORYLATION [LARGE SCALE ANALYSIS] AT SER-193</scope>
    <scope>IDENTIFICATION BY MASS SPECTROMETRY [LARGE SCALE ANALYSIS]</scope>
    <source>
        <tissue>Cervix carcinoma</tissue>
    </source>
</reference>
<reference key="11">
    <citation type="journal article" date="2011" name="BMC Syst. Biol.">
        <title>Initial characterization of the human central proteome.</title>
        <authorList>
            <person name="Burkard T.R."/>
            <person name="Planyavsky M."/>
            <person name="Kaupe I."/>
            <person name="Breitwieser F.P."/>
            <person name="Buerckstuemmer T."/>
            <person name="Bennett K.L."/>
            <person name="Superti-Furga G."/>
            <person name="Colinge J."/>
        </authorList>
    </citation>
    <scope>IDENTIFICATION BY MASS SPECTROMETRY [LARGE SCALE ANALYSIS]</scope>
</reference>
<reference key="12">
    <citation type="journal article" date="2013" name="J. Proteome Res.">
        <title>Toward a comprehensive characterization of a human cancer cell phosphoproteome.</title>
        <authorList>
            <person name="Zhou H."/>
            <person name="Di Palma S."/>
            <person name="Preisinger C."/>
            <person name="Peng M."/>
            <person name="Polat A.N."/>
            <person name="Heck A.J."/>
            <person name="Mohammed S."/>
        </authorList>
    </citation>
    <scope>PHOSPHORYLATION [LARGE SCALE ANALYSIS] AT TYR-90; SER-128; SER-193; TYR-682 AND SER-780</scope>
    <scope>IDENTIFICATION BY MASS SPECTROMETRY [LARGE SCALE ANALYSIS]</scope>
    <source>
        <tissue>Cervix carcinoma</tissue>
        <tissue>Erythroleukemia</tissue>
    </source>
</reference>
<reference key="13">
    <citation type="journal article" date="2003" name="J. Biol. Chem.">
        <title>NCoA-1/SRC-1 is an essential coactivator of STAT5 that binds to the FDL motif in the alpha-helical region of the STAT5 transactivation domain.</title>
        <authorList>
            <person name="Litterst C.M."/>
            <person name="Kliem S."/>
            <person name="Marilley D."/>
            <person name="Pfitzner E."/>
        </authorList>
    </citation>
    <scope>INTERACTION WITH NCOA1</scope>
</reference>
<reference key="14">
    <citation type="journal article" date="2003" name="Mol. Biol. Cell">
        <title>STAT5a activation mediates the epithelial to mesenchymal transition induced by oncogenic RhoA.</title>
        <authorList>
            <person name="Benitah S.A."/>
            <person name="Valeron P.F."/>
            <person name="Rui H."/>
            <person name="Lacal J.C."/>
        </authorList>
    </citation>
    <scope>PHOSPHORYLATION AT TYR-694 BY JAK2</scope>
</reference>
<reference key="15">
    <citation type="journal article" date="2004" name="Blood">
        <title>FLT3 mutations in the activation loop of tyrosine kinase domain are frequently found in infant ALL with MLL rearrangements and pediatric ALL with hyperdiploidy.</title>
        <authorList>
            <person name="Taketani T."/>
            <person name="Taki T."/>
            <person name="Sugita K."/>
            <person name="Furuichi Y."/>
            <person name="Ishii E."/>
            <person name="Hanada R."/>
            <person name="Tsuchida M."/>
            <person name="Sugita K."/>
            <person name="Ida K."/>
            <person name="Hayashi Y."/>
        </authorList>
    </citation>
    <scope>PHOSPHORYLATION IN RESPONSE TO FLT3 SIGNALING</scope>
</reference>
<reference key="16">
    <citation type="journal article" date="2004" name="Cell. Mol. Life Sci.">
        <title>Signal transduction via the stem cell factor receptor/c-Kit.</title>
        <authorList>
            <person name="Ronnstrand L."/>
        </authorList>
    </citation>
    <scope>REVIEW ON ROLE IN KIT SIGNALING</scope>
</reference>
<reference key="17">
    <citation type="journal article" date="2004" name="J. Cell Biol.">
        <title>The ERBB4/HER4 receptor tyrosine kinase regulates gene expression by functioning as a STAT5A nuclear chaperone.</title>
        <authorList>
            <person name="Williams C.C."/>
            <person name="Allison J.G."/>
            <person name="Vidal G.A."/>
            <person name="Burow M.E."/>
            <person name="Beckman B.S."/>
            <person name="Marrero L."/>
            <person name="Jones F.E."/>
        </authorList>
    </citation>
    <scope>FUNCTION</scope>
    <scope>INTERACTION WITH ERBB4</scope>
    <scope>SUBCELLULAR LOCATION</scope>
</reference>
<reference key="18">
    <citation type="journal article" date="2005" name="J. Biol. Chem.">
        <title>Suppressor of cytokine signaling 7 inhibits prolactin, growth hormone, and leptin signaling by interacting with STAT5 or STAT3 and attenuating their nuclear translocation.</title>
        <authorList>
            <person name="Martens N."/>
            <person name="Uzan G."/>
            <person name="Wery M."/>
            <person name="Hooghe R."/>
            <person name="Hooghe-Peters E.L."/>
            <person name="Gertler A."/>
        </authorList>
    </citation>
    <scope>INTERACTION WITH SOCS7</scope>
</reference>
<reference key="19">
    <citation type="journal article" date="2011" name="J. Biol. Chem.">
        <title>Mechanisms of STAT protein activation by oncogenic KIT mutants in neoplastic mast cells.</title>
        <authorList>
            <person name="Chaix A."/>
            <person name="Lopez S."/>
            <person name="Voisset E."/>
            <person name="Gros L."/>
            <person name="Dubreuil P."/>
            <person name="De Sepulveda P."/>
        </authorList>
    </citation>
    <scope>PHOSPHORYLATION AT TYR-694 IN RESPONSE TO KIT SIGNALING</scope>
</reference>
<reference key="20">
    <citation type="journal article" date="2022" name="Proc. Natl. Acad. Sci. U.S.A.">
        <title>Early B cell factor 4 modulates FAS-mediated apoptosis and promotes cytotoxic function in human immune cells.</title>
        <authorList>
            <person name="Kubo S."/>
            <person name="Kataria R."/>
            <person name="Yao Y."/>
            <person name="Gabrielski J.Q."/>
            <person name="Zheng L."/>
            <person name="Markowitz T.E."/>
            <person name="Chan W."/>
            <person name="Song J."/>
            <person name="Boddapati A.K."/>
            <person name="Saeki K."/>
            <person name="Haeupl B."/>
            <person name="Park A.Y."/>
            <person name="Cheng Y.H."/>
            <person name="Cui J."/>
            <person name="Oellerich T."/>
            <person name="Lenardo M.J."/>
        </authorList>
    </citation>
    <scope>INTERACTION WITH EBF4</scope>
</reference>
<evidence type="ECO:0000250" key="1">
    <source>
        <dbReference type="UniProtKB" id="P40763"/>
    </source>
</evidence>
<evidence type="ECO:0000250" key="2">
    <source>
        <dbReference type="UniProtKB" id="P42230"/>
    </source>
</evidence>
<evidence type="ECO:0000250" key="3">
    <source>
        <dbReference type="UniProtKB" id="Q62771"/>
    </source>
</evidence>
<evidence type="ECO:0000255" key="4">
    <source>
        <dbReference type="PROSITE-ProRule" id="PRU00191"/>
    </source>
</evidence>
<evidence type="ECO:0000256" key="5">
    <source>
        <dbReference type="SAM" id="MobiDB-lite"/>
    </source>
</evidence>
<evidence type="ECO:0000269" key="6">
    <source>
    </source>
</evidence>
<evidence type="ECO:0000269" key="7">
    <source>
    </source>
</evidence>
<evidence type="ECO:0000269" key="8">
    <source>
    </source>
</evidence>
<evidence type="ECO:0000269" key="9">
    <source>
    </source>
</evidence>
<evidence type="ECO:0000269" key="10">
    <source>
    </source>
</evidence>
<evidence type="ECO:0000269" key="11">
    <source>
    </source>
</evidence>
<evidence type="ECO:0000269" key="12">
    <source>
    </source>
</evidence>
<evidence type="ECO:0000303" key="13">
    <source>
    </source>
</evidence>
<evidence type="ECO:0000303" key="14">
    <source>
    </source>
</evidence>
<evidence type="ECO:0000303" key="15">
    <source ref="3"/>
</evidence>
<evidence type="ECO:0000305" key="16"/>
<evidence type="ECO:0007744" key="17">
    <source>
    </source>
</evidence>
<evidence type="ECO:0007744" key="18">
    <source>
    </source>
</evidence>
<evidence type="ECO:0007829" key="19">
    <source>
        <dbReference type="PDB" id="7TVA"/>
    </source>
</evidence>
<evidence type="ECO:0007829" key="20">
    <source>
        <dbReference type="PDB" id="7TVB"/>
    </source>
</evidence>
<evidence type="ECO:0007829" key="21">
    <source>
        <dbReference type="PDB" id="7UBT"/>
    </source>
</evidence>
<dbReference type="EMBL" id="L41142">
    <property type="protein sequence ID" value="AAA73962.1"/>
    <property type="molecule type" value="mRNA"/>
</dbReference>
<dbReference type="EMBL" id="U43185">
    <property type="protein sequence ID" value="AAB06589.1"/>
    <property type="molecule type" value="mRNA"/>
</dbReference>
<dbReference type="EMBL" id="DQ471288">
    <property type="protein sequence ID" value="ABF17939.1"/>
    <property type="molecule type" value="mRNA"/>
</dbReference>
<dbReference type="EMBL" id="AK301457">
    <property type="protein sequence ID" value="BAH13486.1"/>
    <property type="molecule type" value="mRNA"/>
</dbReference>
<dbReference type="EMBL" id="AC087691">
    <property type="status" value="NOT_ANNOTATED_CDS"/>
    <property type="molecule type" value="Genomic_DNA"/>
</dbReference>
<dbReference type="EMBL" id="AC099811">
    <property type="status" value="NOT_ANNOTATED_CDS"/>
    <property type="molecule type" value="Genomic_DNA"/>
</dbReference>
<dbReference type="EMBL" id="BC027036">
    <property type="protein sequence ID" value="AAH27036.1"/>
    <property type="molecule type" value="mRNA"/>
</dbReference>
<dbReference type="CCDS" id="CCDS11424.1">
    <molecule id="P42229-1"/>
</dbReference>
<dbReference type="CCDS" id="CCDS74067.1">
    <molecule id="P42229-2"/>
</dbReference>
<dbReference type="PIR" id="G02317">
    <property type="entry name" value="G02317"/>
</dbReference>
<dbReference type="RefSeq" id="NP_001275647.1">
    <molecule id="P42229-1"/>
    <property type="nucleotide sequence ID" value="NM_001288718.2"/>
</dbReference>
<dbReference type="RefSeq" id="NP_001275648.1">
    <molecule id="P42229-2"/>
    <property type="nucleotide sequence ID" value="NM_001288719.2"/>
</dbReference>
<dbReference type="RefSeq" id="NP_001275649.1">
    <property type="nucleotide sequence ID" value="NM_001288720.1"/>
</dbReference>
<dbReference type="RefSeq" id="NP_003143.2">
    <molecule id="P42229-1"/>
    <property type="nucleotide sequence ID" value="NM_003152.3"/>
</dbReference>
<dbReference type="RefSeq" id="XP_047292544.1">
    <molecule id="P42229-1"/>
    <property type="nucleotide sequence ID" value="XM_047436588.1"/>
</dbReference>
<dbReference type="RefSeq" id="XP_047292545.1">
    <molecule id="P42229-1"/>
    <property type="nucleotide sequence ID" value="XM_047436589.1"/>
</dbReference>
<dbReference type="RefSeq" id="XP_047292546.1">
    <molecule id="P42229-2"/>
    <property type="nucleotide sequence ID" value="XM_047436590.1"/>
</dbReference>
<dbReference type="RefSeq" id="XP_054172969.1">
    <molecule id="P42229-1"/>
    <property type="nucleotide sequence ID" value="XM_054316994.1"/>
</dbReference>
<dbReference type="RefSeq" id="XP_054172970.1">
    <molecule id="P42229-1"/>
    <property type="nucleotide sequence ID" value="XM_054316995.1"/>
</dbReference>
<dbReference type="RefSeq" id="XP_054172971.1">
    <molecule id="P42229-2"/>
    <property type="nucleotide sequence ID" value="XM_054316996.1"/>
</dbReference>
<dbReference type="PDB" id="7TVA">
    <property type="method" value="X-ray"/>
    <property type="resolution" value="2.83 A"/>
    <property type="chains" value="A/B=136-705"/>
</dbReference>
<dbReference type="PDB" id="7TVB">
    <property type="method" value="X-ray"/>
    <property type="resolution" value="2.65 A"/>
    <property type="chains" value="A=136-705"/>
</dbReference>
<dbReference type="PDB" id="7UBT">
    <property type="method" value="X-ray"/>
    <property type="resolution" value="2.35 A"/>
    <property type="chains" value="A=136-705"/>
</dbReference>
<dbReference type="PDB" id="7UC6">
    <property type="method" value="X-ray"/>
    <property type="resolution" value="3.10 A"/>
    <property type="chains" value="A=136-705"/>
</dbReference>
<dbReference type="PDB" id="7UC7">
    <property type="method" value="X-ray"/>
    <property type="resolution" value="3.10 A"/>
    <property type="chains" value="A=136-705"/>
</dbReference>
<dbReference type="PDBsum" id="7TVA"/>
<dbReference type="PDBsum" id="7TVB"/>
<dbReference type="PDBsum" id="7UBT"/>
<dbReference type="PDBsum" id="7UC6"/>
<dbReference type="PDBsum" id="7UC7"/>
<dbReference type="SMR" id="P42229"/>
<dbReference type="BioGRID" id="112653">
    <property type="interactions" value="100"/>
</dbReference>
<dbReference type="ComplexPortal" id="CPX-6043">
    <property type="entry name" value="STAT3/STAT5A complex"/>
</dbReference>
<dbReference type="ComplexPortal" id="CPX-6045">
    <property type="entry name" value="STAT5A/STAT5B complex"/>
</dbReference>
<dbReference type="CORUM" id="P42229"/>
<dbReference type="DIP" id="DIP-396N"/>
<dbReference type="FunCoup" id="P42229">
    <property type="interactions" value="2914"/>
</dbReference>
<dbReference type="IntAct" id="P42229">
    <property type="interactions" value="92"/>
</dbReference>
<dbReference type="MINT" id="P42229"/>
<dbReference type="STRING" id="9606.ENSP00000341208"/>
<dbReference type="BindingDB" id="P42229"/>
<dbReference type="ChEMBL" id="CHEMBL5403"/>
<dbReference type="DrugCentral" id="P42229"/>
<dbReference type="GuidetoPHARMACOLOGY" id="3221"/>
<dbReference type="GlyCosmos" id="P42229">
    <property type="glycosylation" value="1 site, 1 glycan"/>
</dbReference>
<dbReference type="GlyGen" id="P42229">
    <property type="glycosylation" value="2 sites, 1 O-linked glycan (1 site)"/>
</dbReference>
<dbReference type="iPTMnet" id="P42229"/>
<dbReference type="PhosphoSitePlus" id="P42229"/>
<dbReference type="BioMuta" id="STAT5A"/>
<dbReference type="DMDM" id="1174462"/>
<dbReference type="CPTAC" id="CPTAC-1270"/>
<dbReference type="CPTAC" id="CPTAC-1271"/>
<dbReference type="CPTAC" id="CPTAC-1728"/>
<dbReference type="jPOST" id="P42229"/>
<dbReference type="MassIVE" id="P42229"/>
<dbReference type="PaxDb" id="9606-ENSP00000341208"/>
<dbReference type="PeptideAtlas" id="P42229"/>
<dbReference type="ProteomicsDB" id="55495">
    <molecule id="P42229-1"/>
</dbReference>
<dbReference type="ProteomicsDB" id="61218"/>
<dbReference type="Pumba" id="P42229"/>
<dbReference type="ABCD" id="P42229">
    <property type="antibodies" value="2 sequenced antibodies"/>
</dbReference>
<dbReference type="Antibodypedia" id="3553">
    <property type="antibodies" value="1812 antibodies from 53 providers"/>
</dbReference>
<dbReference type="CPTC" id="P42229">
    <property type="antibodies" value="1 antibody"/>
</dbReference>
<dbReference type="DNASU" id="6776"/>
<dbReference type="Ensembl" id="ENST00000345506.8">
    <molecule id="P42229-1"/>
    <property type="protein sequence ID" value="ENSP00000341208.4"/>
    <property type="gene ID" value="ENSG00000126561.18"/>
</dbReference>
<dbReference type="Ensembl" id="ENST00000546010.6">
    <molecule id="P42229-2"/>
    <property type="protein sequence ID" value="ENSP00000443107.1"/>
    <property type="gene ID" value="ENSG00000126561.18"/>
</dbReference>
<dbReference type="Ensembl" id="ENST00000590949.6">
    <molecule id="P42229-1"/>
    <property type="protein sequence ID" value="ENSP00000468749.1"/>
    <property type="gene ID" value="ENSG00000126561.18"/>
</dbReference>
<dbReference type="Ensembl" id="ENST00000676585.1">
    <molecule id="P42229-1"/>
    <property type="protein sequence ID" value="ENSP00000504449.1"/>
    <property type="gene ID" value="ENSG00000126561.18"/>
</dbReference>
<dbReference type="Ensembl" id="ENST00000677301.1">
    <molecule id="P42229-1"/>
    <property type="protein sequence ID" value="ENSP00000503262.1"/>
    <property type="gene ID" value="ENSG00000126561.18"/>
</dbReference>
<dbReference type="GeneID" id="6776"/>
<dbReference type="KEGG" id="hsa:6776"/>
<dbReference type="MANE-Select" id="ENST00000590949.6">
    <property type="protein sequence ID" value="ENSP00000468749.1"/>
    <property type="RefSeq nucleotide sequence ID" value="NM_001288718.2"/>
    <property type="RefSeq protein sequence ID" value="NP_001275647.1"/>
</dbReference>
<dbReference type="UCSC" id="uc002hzj.3">
    <molecule id="P42229-1"/>
    <property type="organism name" value="human"/>
</dbReference>
<dbReference type="AGR" id="HGNC:11366"/>
<dbReference type="CTD" id="6776"/>
<dbReference type="DisGeNET" id="6776"/>
<dbReference type="GeneCards" id="STAT5A"/>
<dbReference type="HGNC" id="HGNC:11366">
    <property type="gene designation" value="STAT5A"/>
</dbReference>
<dbReference type="HPA" id="ENSG00000126561">
    <property type="expression patterns" value="Tissue enhanced (adipose)"/>
</dbReference>
<dbReference type="MalaCards" id="STAT5A"/>
<dbReference type="MIM" id="601511">
    <property type="type" value="gene"/>
</dbReference>
<dbReference type="neXtProt" id="NX_P42229"/>
<dbReference type="OpenTargets" id="ENSG00000126561"/>
<dbReference type="PharmGKB" id="PA338"/>
<dbReference type="VEuPathDB" id="HostDB:ENSG00000126561"/>
<dbReference type="eggNOG" id="KOG3667">
    <property type="taxonomic scope" value="Eukaryota"/>
</dbReference>
<dbReference type="GeneTree" id="ENSGT01080000257420"/>
<dbReference type="HOGENOM" id="CLU_014189_2_2_1"/>
<dbReference type="InParanoid" id="P42229"/>
<dbReference type="OMA" id="FDWKNRQ"/>
<dbReference type="OrthoDB" id="19300at2759"/>
<dbReference type="PAN-GO" id="P42229">
    <property type="GO annotations" value="9 GO annotations based on evolutionary models"/>
</dbReference>
<dbReference type="PhylomeDB" id="P42229"/>
<dbReference type="TreeFam" id="TF318648"/>
<dbReference type="PathwayCommons" id="P42229"/>
<dbReference type="Reactome" id="R-HSA-1170546">
    <property type="pathway name" value="Prolactin receptor signaling"/>
</dbReference>
<dbReference type="Reactome" id="R-HSA-1251985">
    <property type="pathway name" value="Nuclear signaling by ERBB4"/>
</dbReference>
<dbReference type="Reactome" id="R-HSA-1266695">
    <property type="pathway name" value="Interleukin-7 signaling"/>
</dbReference>
<dbReference type="Reactome" id="R-HSA-1433557">
    <property type="pathway name" value="Signaling by SCF-KIT"/>
</dbReference>
<dbReference type="Reactome" id="R-HSA-1839117">
    <property type="pathway name" value="Signaling by cytosolic FGFR1 fusion mutants"/>
</dbReference>
<dbReference type="Reactome" id="R-HSA-186763">
    <property type="pathway name" value="Downstream signal transduction"/>
</dbReference>
<dbReference type="Reactome" id="R-HSA-2586552">
    <property type="pathway name" value="Signaling by Leptin"/>
</dbReference>
<dbReference type="Reactome" id="R-HSA-512988">
    <property type="pathway name" value="Interleukin-3, Interleukin-5 and GM-CSF signaling"/>
</dbReference>
<dbReference type="Reactome" id="R-HSA-8854691">
    <property type="pathway name" value="Interleukin-20 family signaling"/>
</dbReference>
<dbReference type="Reactome" id="R-HSA-8983432">
    <property type="pathway name" value="Interleukin-15 signaling"/>
</dbReference>
<dbReference type="Reactome" id="R-HSA-8985947">
    <property type="pathway name" value="Interleukin-9 signaling"/>
</dbReference>
<dbReference type="Reactome" id="R-HSA-9020558">
    <property type="pathway name" value="Interleukin-2 signaling"/>
</dbReference>
<dbReference type="Reactome" id="R-HSA-9020958">
    <property type="pathway name" value="Interleukin-21 signaling"/>
</dbReference>
<dbReference type="Reactome" id="R-HSA-9027283">
    <property type="pathway name" value="Erythropoietin activates STAT5"/>
</dbReference>
<dbReference type="Reactome" id="R-HSA-9645135">
    <property type="pathway name" value="STAT5 Activation"/>
</dbReference>
<dbReference type="Reactome" id="R-HSA-9670439">
    <property type="pathway name" value="Signaling by phosphorylated juxtamembrane, extracellular and kinase domain KIT mutants"/>
</dbReference>
<dbReference type="Reactome" id="R-HSA-9674555">
    <property type="pathway name" value="Signaling by CSF3 (G-CSF)"/>
</dbReference>
<dbReference type="Reactome" id="R-HSA-9702518">
    <property type="pathway name" value="STAT5 activation downstream of FLT3 ITD mutants"/>
</dbReference>
<dbReference type="Reactome" id="R-HSA-9703465">
    <property type="pathway name" value="Signaling by FLT3 fusion proteins"/>
</dbReference>
<dbReference type="Reactome" id="R-HSA-9705462">
    <property type="pathway name" value="Inactivation of CSF3 (G-CSF) signaling"/>
</dbReference>
<dbReference type="Reactome" id="R-HSA-9725371">
    <property type="pathway name" value="Nuclear events stimulated by ALK signaling in cancer"/>
</dbReference>
<dbReference type="Reactome" id="R-HSA-982772">
    <property type="pathway name" value="Growth hormone receptor signaling"/>
</dbReference>
<dbReference type="SignaLink" id="P42229"/>
<dbReference type="SIGNOR" id="P42229"/>
<dbReference type="BioGRID-ORCS" id="6776">
    <property type="hits" value="268 hits in 1187 CRISPR screens"/>
</dbReference>
<dbReference type="CD-CODE" id="8C2F96ED">
    <property type="entry name" value="Centrosome"/>
</dbReference>
<dbReference type="ChiTaRS" id="STAT5A">
    <property type="organism name" value="human"/>
</dbReference>
<dbReference type="GeneWiki" id="STAT5A"/>
<dbReference type="GenomeRNAi" id="6776"/>
<dbReference type="Pharos" id="P42229">
    <property type="development level" value="Tchem"/>
</dbReference>
<dbReference type="PRO" id="PR:P42229"/>
<dbReference type="Proteomes" id="UP000005640">
    <property type="component" value="Chromosome 17"/>
</dbReference>
<dbReference type="RNAct" id="P42229">
    <property type="molecule type" value="protein"/>
</dbReference>
<dbReference type="Bgee" id="ENSG00000126561">
    <property type="expression patterns" value="Expressed in granulocyte and 119 other cell types or tissues"/>
</dbReference>
<dbReference type="ExpressionAtlas" id="P42229">
    <property type="expression patterns" value="baseline and differential"/>
</dbReference>
<dbReference type="GO" id="GO:0000785">
    <property type="term" value="C:chromatin"/>
    <property type="evidence" value="ECO:0000247"/>
    <property type="project" value="NTNU_SB"/>
</dbReference>
<dbReference type="GO" id="GO:0005737">
    <property type="term" value="C:cytoplasm"/>
    <property type="evidence" value="ECO:0000318"/>
    <property type="project" value="GO_Central"/>
</dbReference>
<dbReference type="GO" id="GO:0005829">
    <property type="term" value="C:cytosol"/>
    <property type="evidence" value="ECO:0000314"/>
    <property type="project" value="HPA"/>
</dbReference>
<dbReference type="GO" id="GO:0005654">
    <property type="term" value="C:nucleoplasm"/>
    <property type="evidence" value="ECO:0000314"/>
    <property type="project" value="HPA"/>
</dbReference>
<dbReference type="GO" id="GO:0005634">
    <property type="term" value="C:nucleus"/>
    <property type="evidence" value="ECO:0000314"/>
    <property type="project" value="UniProt"/>
</dbReference>
<dbReference type="GO" id="GO:0090575">
    <property type="term" value="C:RNA polymerase II transcription regulator complex"/>
    <property type="evidence" value="ECO:0000318"/>
    <property type="project" value="GO_Central"/>
</dbReference>
<dbReference type="GO" id="GO:0001228">
    <property type="term" value="F:DNA-binding transcription activator activity, RNA polymerase II-specific"/>
    <property type="evidence" value="ECO:0007669"/>
    <property type="project" value="Ensembl"/>
</dbReference>
<dbReference type="GO" id="GO:0003700">
    <property type="term" value="F:DNA-binding transcription factor activity"/>
    <property type="evidence" value="ECO:0000314"/>
    <property type="project" value="UniProt"/>
</dbReference>
<dbReference type="GO" id="GO:0000981">
    <property type="term" value="F:DNA-binding transcription factor activity, RNA polymerase II-specific"/>
    <property type="evidence" value="ECO:0000247"/>
    <property type="project" value="NTNU_SB"/>
</dbReference>
<dbReference type="GO" id="GO:0140297">
    <property type="term" value="F:DNA-binding transcription factor binding"/>
    <property type="evidence" value="ECO:0000353"/>
    <property type="project" value="UniProtKB"/>
</dbReference>
<dbReference type="GO" id="GO:0042301">
    <property type="term" value="F:phosphate ion binding"/>
    <property type="evidence" value="ECO:0007669"/>
    <property type="project" value="Ensembl"/>
</dbReference>
<dbReference type="GO" id="GO:0000978">
    <property type="term" value="F:RNA polymerase II cis-regulatory region sequence-specific DNA binding"/>
    <property type="evidence" value="ECO:0000318"/>
    <property type="project" value="GO_Central"/>
</dbReference>
<dbReference type="GO" id="GO:0050798">
    <property type="term" value="P:activated T cell proliferation"/>
    <property type="evidence" value="ECO:0007669"/>
    <property type="project" value="Ensembl"/>
</dbReference>
<dbReference type="GO" id="GO:0030183">
    <property type="term" value="P:B cell differentiation"/>
    <property type="evidence" value="ECO:0007669"/>
    <property type="project" value="Ensembl"/>
</dbReference>
<dbReference type="GO" id="GO:0007259">
    <property type="term" value="P:cell surface receptor signaling pathway via JAK-STAT"/>
    <property type="evidence" value="ECO:0000318"/>
    <property type="project" value="GO_Central"/>
</dbReference>
<dbReference type="GO" id="GO:0097011">
    <property type="term" value="P:cellular response to granulocyte macrophage colony-stimulating factor stimulus"/>
    <property type="evidence" value="ECO:0007669"/>
    <property type="project" value="Ensembl"/>
</dbReference>
<dbReference type="GO" id="GO:0019221">
    <property type="term" value="P:cytokine-mediated signaling pathway"/>
    <property type="evidence" value="ECO:0000318"/>
    <property type="project" value="GO_Central"/>
</dbReference>
<dbReference type="GO" id="GO:0006952">
    <property type="term" value="P:defense response"/>
    <property type="evidence" value="ECO:0000318"/>
    <property type="project" value="GO_Central"/>
</dbReference>
<dbReference type="GO" id="GO:0046543">
    <property type="term" value="P:development of secondary female sexual characteristics"/>
    <property type="evidence" value="ECO:0007669"/>
    <property type="project" value="Ensembl"/>
</dbReference>
<dbReference type="GO" id="GO:0046544">
    <property type="term" value="P:development of secondary male sexual characteristics"/>
    <property type="evidence" value="ECO:0007669"/>
    <property type="project" value="Ensembl"/>
</dbReference>
<dbReference type="GO" id="GO:0030222">
    <property type="term" value="P:eosinophil differentiation"/>
    <property type="evidence" value="ECO:0000314"/>
    <property type="project" value="UniProt"/>
</dbReference>
<dbReference type="GO" id="GO:0060742">
    <property type="term" value="P:epithelial cell differentiation involved in prostate gland development"/>
    <property type="evidence" value="ECO:0007669"/>
    <property type="project" value="Ensembl"/>
</dbReference>
<dbReference type="GO" id="GO:0030218">
    <property type="term" value="P:erythrocyte differentiation"/>
    <property type="evidence" value="ECO:0007669"/>
    <property type="project" value="Ensembl"/>
</dbReference>
<dbReference type="GO" id="GO:0007565">
    <property type="term" value="P:female pregnancy"/>
    <property type="evidence" value="ECO:0007669"/>
    <property type="project" value="Ensembl"/>
</dbReference>
<dbReference type="GO" id="GO:0042492">
    <property type="term" value="P:gamma-delta T cell differentiation"/>
    <property type="evidence" value="ECO:0007669"/>
    <property type="project" value="Ensembl"/>
</dbReference>
<dbReference type="GO" id="GO:0060397">
    <property type="term" value="P:growth hormone receptor signaling pathway via JAK-STAT"/>
    <property type="evidence" value="ECO:0000318"/>
    <property type="project" value="GO_Central"/>
</dbReference>
<dbReference type="GO" id="GO:0035723">
    <property type="term" value="P:interleukin-15-mediated signaling pathway"/>
    <property type="evidence" value="ECO:0000314"/>
    <property type="project" value="UniProt"/>
</dbReference>
<dbReference type="GO" id="GO:0038110">
    <property type="term" value="P:interleukin-2-mediated signaling pathway"/>
    <property type="evidence" value="ECO:0000314"/>
    <property type="project" value="UniProt"/>
</dbReference>
<dbReference type="GO" id="GO:0038156">
    <property type="term" value="P:interleukin-3-mediated signaling pathway"/>
    <property type="evidence" value="ECO:0000314"/>
    <property type="project" value="UniProt"/>
</dbReference>
<dbReference type="GO" id="GO:0035771">
    <property type="term" value="P:interleukin-4-mediated signaling pathway"/>
    <property type="evidence" value="ECO:0000314"/>
    <property type="project" value="UniProt"/>
</dbReference>
<dbReference type="GO" id="GO:0038043">
    <property type="term" value="P:interleukin-5-mediated signaling pathway"/>
    <property type="evidence" value="ECO:0000314"/>
    <property type="project" value="UniProt"/>
</dbReference>
<dbReference type="GO" id="GO:0038111">
    <property type="term" value="P:interleukin-7-mediated signaling pathway"/>
    <property type="evidence" value="ECO:0000314"/>
    <property type="project" value="UniProt"/>
</dbReference>
<dbReference type="GO" id="GO:0038113">
    <property type="term" value="P:interleukin-9-mediated signaling pathway"/>
    <property type="evidence" value="ECO:0000314"/>
    <property type="project" value="UniProt"/>
</dbReference>
<dbReference type="GO" id="GO:0007595">
    <property type="term" value="P:lactation"/>
    <property type="evidence" value="ECO:0007669"/>
    <property type="project" value="UniProtKB-KW"/>
</dbReference>
<dbReference type="GO" id="GO:0019915">
    <property type="term" value="P:lipid storage"/>
    <property type="evidence" value="ECO:0007669"/>
    <property type="project" value="Ensembl"/>
</dbReference>
<dbReference type="GO" id="GO:0001553">
    <property type="term" value="P:luteinization"/>
    <property type="evidence" value="ECO:0007669"/>
    <property type="project" value="Ensembl"/>
</dbReference>
<dbReference type="GO" id="GO:0061180">
    <property type="term" value="P:mammary gland epithelium development"/>
    <property type="evidence" value="ECO:0007669"/>
    <property type="project" value="Ensembl"/>
</dbReference>
<dbReference type="GO" id="GO:0033024">
    <property type="term" value="P:mast cell apoptotic process"/>
    <property type="evidence" value="ECO:0007669"/>
    <property type="project" value="Ensembl"/>
</dbReference>
<dbReference type="GO" id="GO:0060374">
    <property type="term" value="P:mast cell differentiation"/>
    <property type="evidence" value="ECO:0007669"/>
    <property type="project" value="Ensembl"/>
</dbReference>
<dbReference type="GO" id="GO:0070662">
    <property type="term" value="P:mast cell proliferation"/>
    <property type="evidence" value="ECO:0007669"/>
    <property type="project" value="Ensembl"/>
</dbReference>
<dbReference type="GO" id="GO:0000278">
    <property type="term" value="P:mitotic cell cycle"/>
    <property type="evidence" value="ECO:0007669"/>
    <property type="project" value="Ensembl"/>
</dbReference>
<dbReference type="GO" id="GO:0001779">
    <property type="term" value="P:natural killer cell differentiation"/>
    <property type="evidence" value="ECO:0007669"/>
    <property type="project" value="Ensembl"/>
</dbReference>
<dbReference type="GO" id="GO:0042267">
    <property type="term" value="P:natural killer cell mediated cytotoxicity"/>
    <property type="evidence" value="ECO:0007669"/>
    <property type="project" value="Ensembl"/>
</dbReference>
<dbReference type="GO" id="GO:0045647">
    <property type="term" value="P:negative regulation of erythrocyte differentiation"/>
    <property type="evidence" value="ECO:0007669"/>
    <property type="project" value="Ensembl"/>
</dbReference>
<dbReference type="GO" id="GO:0033026">
    <property type="term" value="P:negative regulation of mast cell apoptotic process"/>
    <property type="evidence" value="ECO:0007669"/>
    <property type="project" value="Ensembl"/>
</dbReference>
<dbReference type="GO" id="GO:2000329">
    <property type="term" value="P:negative regulation of T-helper 17 cell lineage commitment"/>
    <property type="evidence" value="ECO:0000314"/>
    <property type="project" value="UniProt"/>
</dbReference>
<dbReference type="GO" id="GO:0048541">
    <property type="term" value="P:Peyer's patch development"/>
    <property type="evidence" value="ECO:0007669"/>
    <property type="project" value="Ensembl"/>
</dbReference>
<dbReference type="GO" id="GO:0042104">
    <property type="term" value="P:positive regulation of activated T cell proliferation"/>
    <property type="evidence" value="ECO:0007669"/>
    <property type="project" value="Ensembl"/>
</dbReference>
<dbReference type="GO" id="GO:0045579">
    <property type="term" value="P:positive regulation of B cell differentiation"/>
    <property type="evidence" value="ECO:0007669"/>
    <property type="project" value="Ensembl"/>
</dbReference>
<dbReference type="GO" id="GO:0043536">
    <property type="term" value="P:positive regulation of blood vessel endothelial cell migration"/>
    <property type="evidence" value="ECO:0000315"/>
    <property type="project" value="BHF-UCL"/>
</dbReference>
<dbReference type="GO" id="GO:0001938">
    <property type="term" value="P:positive regulation of endothelial cell proliferation"/>
    <property type="evidence" value="ECO:0000315"/>
    <property type="project" value="BHF-UCL"/>
</dbReference>
<dbReference type="GO" id="GO:0045588">
    <property type="term" value="P:positive regulation of gamma-delta T cell differentiation"/>
    <property type="evidence" value="ECO:0007669"/>
    <property type="project" value="Ensembl"/>
</dbReference>
<dbReference type="GO" id="GO:0050729">
    <property type="term" value="P:positive regulation of inflammatory response"/>
    <property type="evidence" value="ECO:0007669"/>
    <property type="project" value="Ensembl"/>
</dbReference>
<dbReference type="GO" id="GO:0032743">
    <property type="term" value="P:positive regulation of interleukin-2 production"/>
    <property type="evidence" value="ECO:0007669"/>
    <property type="project" value="Ensembl"/>
</dbReference>
<dbReference type="GO" id="GO:0060376">
    <property type="term" value="P:positive regulation of mast cell differentiation"/>
    <property type="evidence" value="ECO:0007669"/>
    <property type="project" value="Ensembl"/>
</dbReference>
<dbReference type="GO" id="GO:0070668">
    <property type="term" value="P:positive regulation of mast cell proliferation"/>
    <property type="evidence" value="ECO:0007669"/>
    <property type="project" value="Ensembl"/>
</dbReference>
<dbReference type="GO" id="GO:0045931">
    <property type="term" value="P:positive regulation of mitotic cell cycle"/>
    <property type="evidence" value="ECO:0007669"/>
    <property type="project" value="Ensembl"/>
</dbReference>
<dbReference type="GO" id="GO:0040018">
    <property type="term" value="P:positive regulation of multicellular organism growth"/>
    <property type="evidence" value="ECO:0007669"/>
    <property type="project" value="Ensembl"/>
</dbReference>
<dbReference type="GO" id="GO:0032825">
    <property type="term" value="P:positive regulation of natural killer cell differentiation"/>
    <property type="evidence" value="ECO:0007669"/>
    <property type="project" value="Ensembl"/>
</dbReference>
<dbReference type="GO" id="GO:0045954">
    <property type="term" value="P:positive regulation of natural killer cell mediated cytotoxicity"/>
    <property type="evidence" value="ECO:0007669"/>
    <property type="project" value="Ensembl"/>
</dbReference>
<dbReference type="GO" id="GO:0045944">
    <property type="term" value="P:positive regulation of transcription by RNA polymerase II"/>
    <property type="evidence" value="ECO:0000303"/>
    <property type="project" value="ComplexPortal"/>
</dbReference>
<dbReference type="GO" id="GO:0060740">
    <property type="term" value="P:prostate gland epithelium morphogenesis"/>
    <property type="evidence" value="ECO:0007669"/>
    <property type="project" value="Ensembl"/>
</dbReference>
<dbReference type="GO" id="GO:0038026">
    <property type="term" value="P:reelin-mediated signaling pathway"/>
    <property type="evidence" value="ECO:0000314"/>
    <property type="project" value="MGI"/>
</dbReference>
<dbReference type="GO" id="GO:0042127">
    <property type="term" value="P:regulation of cell population proliferation"/>
    <property type="evidence" value="ECO:0000318"/>
    <property type="project" value="GO_Central"/>
</dbReference>
<dbReference type="GO" id="GO:0030856">
    <property type="term" value="P:regulation of epithelial cell differentiation"/>
    <property type="evidence" value="ECO:0007669"/>
    <property type="project" value="Ensembl"/>
</dbReference>
<dbReference type="GO" id="GO:0040014">
    <property type="term" value="P:regulation of multicellular organism growth"/>
    <property type="evidence" value="ECO:0000250"/>
    <property type="project" value="BHF-UCL"/>
</dbReference>
<dbReference type="GO" id="GO:0019218">
    <property type="term" value="P:regulation of steroid metabolic process"/>
    <property type="evidence" value="ECO:0007669"/>
    <property type="project" value="Ensembl"/>
</dbReference>
<dbReference type="GO" id="GO:0006357">
    <property type="term" value="P:regulation of transcription by RNA polymerase II"/>
    <property type="evidence" value="ECO:0000318"/>
    <property type="project" value="GO_Central"/>
</dbReference>
<dbReference type="GO" id="GO:0043434">
    <property type="term" value="P:response to peptide hormone"/>
    <property type="evidence" value="ECO:0000318"/>
    <property type="project" value="GO_Central"/>
</dbReference>
<dbReference type="GO" id="GO:0033077">
    <property type="term" value="P:T cell differentiation in thymus"/>
    <property type="evidence" value="ECO:0007669"/>
    <property type="project" value="Ensembl"/>
</dbReference>
<dbReference type="GO" id="GO:0043029">
    <property type="term" value="P:T cell homeostasis"/>
    <property type="evidence" value="ECO:0007669"/>
    <property type="project" value="Ensembl"/>
</dbReference>
<dbReference type="GO" id="GO:0019530">
    <property type="term" value="P:taurine metabolic process"/>
    <property type="evidence" value="ECO:0000250"/>
    <property type="project" value="BHF-UCL"/>
</dbReference>
<dbReference type="GO" id="GO:0038163">
    <property type="term" value="P:thrombopoietin-mediated signaling pathway"/>
    <property type="evidence" value="ECO:0000314"/>
    <property type="project" value="UniProt"/>
</dbReference>
<dbReference type="GO" id="GO:0006366">
    <property type="term" value="P:transcription by RNA polymerase II"/>
    <property type="evidence" value="ECO:0007669"/>
    <property type="project" value="Ensembl"/>
</dbReference>
<dbReference type="CDD" id="cd10421">
    <property type="entry name" value="SH2_STAT5a"/>
    <property type="match status" value="1"/>
</dbReference>
<dbReference type="CDD" id="cd16855">
    <property type="entry name" value="STAT5_CCD"/>
    <property type="match status" value="1"/>
</dbReference>
<dbReference type="CDD" id="cd16849">
    <property type="entry name" value="STAT5_DBD"/>
    <property type="match status" value="1"/>
</dbReference>
<dbReference type="FunFam" id="1.10.532.10:FF:000002">
    <property type="entry name" value="Signal transducer and activator of transcription"/>
    <property type="match status" value="1"/>
</dbReference>
<dbReference type="FunFam" id="1.20.1050.20:FF:000002">
    <property type="entry name" value="Signal transducer and activator of transcription"/>
    <property type="match status" value="1"/>
</dbReference>
<dbReference type="FunFam" id="2.60.40.630:FF:000002">
    <property type="entry name" value="Signal transducer and activator of transcription"/>
    <property type="match status" value="1"/>
</dbReference>
<dbReference type="FunFam" id="3.30.505.10:FF:000025">
    <property type="entry name" value="Signal transducer and activator of transcription"/>
    <property type="match status" value="1"/>
</dbReference>
<dbReference type="FunFam" id="1.10.238.10:FF:000029">
    <property type="entry name" value="Signal transducer and transcription activator 6"/>
    <property type="match status" value="1"/>
</dbReference>
<dbReference type="Gene3D" id="1.10.238.10">
    <property type="entry name" value="EF-hand"/>
    <property type="match status" value="1"/>
</dbReference>
<dbReference type="Gene3D" id="3.30.505.10">
    <property type="entry name" value="SH2 domain"/>
    <property type="match status" value="1"/>
</dbReference>
<dbReference type="Gene3D" id="1.20.1050.20">
    <property type="entry name" value="STAT transcription factor, all-alpha domain"/>
    <property type="match status" value="1"/>
</dbReference>
<dbReference type="Gene3D" id="2.60.40.630">
    <property type="entry name" value="STAT transcription factor, DNA-binding domain"/>
    <property type="match status" value="1"/>
</dbReference>
<dbReference type="Gene3D" id="1.10.532.10">
    <property type="entry name" value="STAT transcription factor, N-terminal domain"/>
    <property type="match status" value="1"/>
</dbReference>
<dbReference type="InterPro" id="IPR008967">
    <property type="entry name" value="p53-like_TF_DNA-bd_sf"/>
</dbReference>
<dbReference type="InterPro" id="IPR000980">
    <property type="entry name" value="SH2"/>
</dbReference>
<dbReference type="InterPro" id="IPR036860">
    <property type="entry name" value="SH2_dom_sf"/>
</dbReference>
<dbReference type="InterPro" id="IPR001217">
    <property type="entry name" value="STAT"/>
</dbReference>
<dbReference type="InterPro" id="IPR046994">
    <property type="entry name" value="STAT5_CCD"/>
</dbReference>
<dbReference type="InterPro" id="IPR035858">
    <property type="entry name" value="STAT5a/5b_DBD"/>
</dbReference>
<dbReference type="InterPro" id="IPR048988">
    <property type="entry name" value="STAT_linker"/>
</dbReference>
<dbReference type="InterPro" id="IPR036535">
    <property type="entry name" value="STAT_N_sf"/>
</dbReference>
<dbReference type="InterPro" id="IPR013800">
    <property type="entry name" value="STAT_TF_alpha"/>
</dbReference>
<dbReference type="InterPro" id="IPR015988">
    <property type="entry name" value="STAT_TF_coiled-coil"/>
</dbReference>
<dbReference type="InterPro" id="IPR013801">
    <property type="entry name" value="STAT_TF_DNA-bd"/>
</dbReference>
<dbReference type="InterPro" id="IPR012345">
    <property type="entry name" value="STAT_TF_DNA-bd_N"/>
</dbReference>
<dbReference type="InterPro" id="IPR013799">
    <property type="entry name" value="STAT_TF_prot_interaction"/>
</dbReference>
<dbReference type="PANTHER" id="PTHR11801">
    <property type="entry name" value="SIGNAL TRANSDUCER AND ACTIVATOR OF TRANSCRIPTION"/>
    <property type="match status" value="1"/>
</dbReference>
<dbReference type="Pfam" id="PF00017">
    <property type="entry name" value="SH2"/>
    <property type="match status" value="1"/>
</dbReference>
<dbReference type="Pfam" id="PF01017">
    <property type="entry name" value="STAT_alpha"/>
    <property type="match status" value="1"/>
</dbReference>
<dbReference type="Pfam" id="PF02864">
    <property type="entry name" value="STAT_bind"/>
    <property type="match status" value="1"/>
</dbReference>
<dbReference type="Pfam" id="PF02865">
    <property type="entry name" value="STAT_int"/>
    <property type="match status" value="1"/>
</dbReference>
<dbReference type="Pfam" id="PF21354">
    <property type="entry name" value="STAT_linker"/>
    <property type="match status" value="1"/>
</dbReference>
<dbReference type="SMART" id="SM00252">
    <property type="entry name" value="SH2"/>
    <property type="match status" value="1"/>
</dbReference>
<dbReference type="SMART" id="SM00964">
    <property type="entry name" value="STAT_int"/>
    <property type="match status" value="1"/>
</dbReference>
<dbReference type="SUPFAM" id="SSF49417">
    <property type="entry name" value="p53-like transcription factors"/>
    <property type="match status" value="1"/>
</dbReference>
<dbReference type="SUPFAM" id="SSF55550">
    <property type="entry name" value="SH2 domain"/>
    <property type="match status" value="1"/>
</dbReference>
<dbReference type="SUPFAM" id="SSF47655">
    <property type="entry name" value="STAT"/>
    <property type="match status" value="1"/>
</dbReference>
<dbReference type="SUPFAM" id="SSF48092">
    <property type="entry name" value="Transcription factor STAT-4 N-domain"/>
    <property type="match status" value="1"/>
</dbReference>
<dbReference type="PROSITE" id="PS50001">
    <property type="entry name" value="SH2"/>
    <property type="match status" value="1"/>
</dbReference>
<gene>
    <name type="primary">STAT5A</name>
    <name type="synonym">STAT5</name>
</gene>
<accession>P42229</accession>
<accession>Q1KLZ6</accession>
<keyword id="KW-0002">3D-structure</keyword>
<keyword id="KW-0010">Activator</keyword>
<keyword id="KW-0025">Alternative splicing</keyword>
<keyword id="KW-0963">Cytoplasm</keyword>
<keyword id="KW-0238">DNA-binding</keyword>
<keyword id="KW-0421">Lactation</keyword>
<keyword id="KW-0539">Nucleus</keyword>
<keyword id="KW-0597">Phosphoprotein</keyword>
<keyword id="KW-1267">Proteomics identification</keyword>
<keyword id="KW-1185">Reference proteome</keyword>
<keyword id="KW-0727">SH2 domain</keyword>
<keyword id="KW-0804">Transcription</keyword>
<keyword id="KW-0805">Transcription regulation</keyword>
<keyword id="KW-0832">Ubl conjugation</keyword>
<feature type="chain" id="PRO_0000182423" description="Signal transducer and activator of transcription 5A">
    <location>
        <begin position="1"/>
        <end position="794"/>
    </location>
</feature>
<feature type="domain" description="SH2" evidence="4">
    <location>
        <begin position="589"/>
        <end position="686"/>
    </location>
</feature>
<feature type="region of interest" description="Disordered" evidence="5">
    <location>
        <begin position="773"/>
        <end position="794"/>
    </location>
</feature>
<feature type="modified residue" description="Phosphotyrosine" evidence="18">
    <location>
        <position position="90"/>
    </location>
</feature>
<feature type="modified residue" description="Phosphoserine" evidence="18">
    <location>
        <position position="128"/>
    </location>
</feature>
<feature type="modified residue" description="Phosphoserine" evidence="17 18">
    <location>
        <position position="193"/>
    </location>
</feature>
<feature type="modified residue" description="Phosphotyrosine" evidence="18">
    <location>
        <position position="682"/>
    </location>
</feature>
<feature type="modified residue" description="Phosphotyrosine; by JAK2" evidence="7 11">
    <location>
        <position position="694"/>
    </location>
</feature>
<feature type="modified residue" description="Phosphoserine" evidence="18">
    <location>
        <position position="780"/>
    </location>
</feature>
<feature type="splice variant" id="VSP_053332" description="In isoform 2." evidence="13 15">
    <location>
        <begin position="96"/>
        <end position="125"/>
    </location>
</feature>
<feature type="sequence variant" id="VAR_052073" description="In dbSNP:rs2230134.">
    <original>R</original>
    <variation>H</variation>
    <location>
        <position position="389"/>
    </location>
</feature>
<feature type="sequence conflict" description="In Ref. 2; AAB06589." evidence="16" ref="2">
    <original>G</original>
    <variation>R</variation>
    <location>
        <position position="88"/>
    </location>
</feature>
<feature type="helix" evidence="21">
    <location>
        <begin position="140"/>
        <end position="186"/>
    </location>
</feature>
<feature type="helix" evidence="20">
    <location>
        <begin position="188"/>
        <end position="191"/>
    </location>
</feature>
<feature type="helix" evidence="21">
    <location>
        <begin position="196"/>
        <end position="249"/>
    </location>
</feature>
<feature type="helix" evidence="21">
    <location>
        <begin position="251"/>
        <end position="262"/>
    </location>
</feature>
<feature type="turn" evidence="21">
    <location>
        <begin position="263"/>
        <end position="265"/>
    </location>
</feature>
<feature type="helix" evidence="21">
    <location>
        <begin position="273"/>
        <end position="302"/>
    </location>
</feature>
<feature type="helix" evidence="21">
    <location>
        <begin position="309"/>
        <end position="330"/>
    </location>
</feature>
<feature type="strand" evidence="21">
    <location>
        <begin position="332"/>
        <end position="336"/>
    </location>
</feature>
<feature type="strand" evidence="21">
    <location>
        <begin position="340"/>
        <end position="343"/>
    </location>
</feature>
<feature type="strand" evidence="21">
    <location>
        <begin position="347"/>
        <end position="354"/>
    </location>
</feature>
<feature type="turn" evidence="21">
    <location>
        <begin position="355"/>
        <end position="359"/>
    </location>
</feature>
<feature type="turn" evidence="21">
    <location>
        <begin position="361"/>
        <end position="364"/>
    </location>
</feature>
<feature type="strand" evidence="21">
    <location>
        <begin position="368"/>
        <end position="375"/>
    </location>
</feature>
<feature type="helix" evidence="21">
    <location>
        <begin position="376"/>
        <end position="383"/>
    </location>
</feature>
<feature type="turn" evidence="19">
    <location>
        <begin position="384"/>
        <end position="387"/>
    </location>
</feature>
<feature type="strand" evidence="21">
    <location>
        <begin position="393"/>
        <end position="397"/>
    </location>
</feature>
<feature type="strand" evidence="21">
    <location>
        <begin position="400"/>
        <end position="402"/>
    </location>
</feature>
<feature type="strand" evidence="21">
    <location>
        <begin position="404"/>
        <end position="406"/>
    </location>
</feature>
<feature type="turn" evidence="21">
    <location>
        <begin position="407"/>
        <end position="410"/>
    </location>
</feature>
<feature type="strand" evidence="21">
    <location>
        <begin position="411"/>
        <end position="424"/>
    </location>
</feature>
<feature type="helix" evidence="21">
    <location>
        <begin position="435"/>
        <end position="437"/>
    </location>
</feature>
<feature type="strand" evidence="21">
    <location>
        <begin position="439"/>
        <end position="452"/>
    </location>
</feature>
<feature type="strand" evidence="21">
    <location>
        <begin position="456"/>
        <end position="462"/>
    </location>
</feature>
<feature type="strand" evidence="21">
    <location>
        <begin position="466"/>
        <end position="472"/>
    </location>
</feature>
<feature type="helix" evidence="21">
    <location>
        <begin position="475"/>
        <end position="488"/>
    </location>
</feature>
<feature type="strand" evidence="21">
    <location>
        <begin position="500"/>
        <end position="503"/>
    </location>
</feature>
<feature type="helix" evidence="21">
    <location>
        <begin position="504"/>
        <end position="519"/>
    </location>
</feature>
<feature type="helix" evidence="21">
    <location>
        <begin position="527"/>
        <end position="538"/>
    </location>
</feature>
<feature type="helix" evidence="21">
    <location>
        <begin position="545"/>
        <end position="548"/>
    </location>
</feature>
<feature type="strand" evidence="21">
    <location>
        <begin position="552"/>
        <end position="554"/>
    </location>
</feature>
<feature type="helix" evidence="21">
    <location>
        <begin position="555"/>
        <end position="559"/>
    </location>
</feature>
<feature type="strand" evidence="21">
    <location>
        <begin position="566"/>
        <end position="568"/>
    </location>
</feature>
<feature type="helix" evidence="21">
    <location>
        <begin position="570"/>
        <end position="584"/>
    </location>
</feature>
<feature type="helix" evidence="21">
    <location>
        <begin position="586"/>
        <end position="590"/>
    </location>
</feature>
<feature type="strand" evidence="19">
    <location>
        <begin position="594"/>
        <end position="597"/>
    </location>
</feature>
<feature type="helix" evidence="21">
    <location>
        <begin position="600"/>
        <end position="607"/>
    </location>
</feature>
<feature type="strand" evidence="21">
    <location>
        <begin position="614"/>
        <end position="619"/>
    </location>
</feature>
<feature type="strand" evidence="21">
    <location>
        <begin position="621"/>
        <end position="623"/>
    </location>
</feature>
<feature type="strand" evidence="21">
    <location>
        <begin position="627"/>
        <end position="632"/>
    </location>
</feature>
<feature type="strand" evidence="21">
    <location>
        <begin position="639"/>
        <end position="642"/>
    </location>
</feature>
<feature type="helix" evidence="21">
    <location>
        <begin position="648"/>
        <end position="653"/>
    </location>
</feature>
<feature type="helix" evidence="21">
    <location>
        <begin position="656"/>
        <end position="662"/>
    </location>
</feature>
<feature type="turn" evidence="21">
    <location>
        <begin position="670"/>
        <end position="672"/>
    </location>
</feature>
<feature type="helix" evidence="21">
    <location>
        <begin position="675"/>
        <end position="679"/>
    </location>
</feature>
<feature type="helix" evidence="21">
    <location>
        <begin position="680"/>
        <end position="682"/>
    </location>
</feature>
<feature type="helix" evidence="21">
    <location>
        <begin position="690"/>
        <end position="692"/>
    </location>
</feature>
<name>STA5A_HUMAN</name>
<proteinExistence type="evidence at protein level"/>